<dbReference type="EMBL" id="AF165916">
    <property type="protein sequence ID" value="AAF00222.1"/>
    <property type="molecule type" value="mRNA"/>
</dbReference>
<dbReference type="EMBL" id="AF165915">
    <property type="protein sequence ID" value="AAF00221.1"/>
    <property type="molecule type" value="mRNA"/>
</dbReference>
<dbReference type="EMBL" id="AF165917">
    <property type="protein sequence ID" value="AAF00223.1"/>
    <property type="molecule type" value="mRNA"/>
</dbReference>
<dbReference type="RefSeq" id="NP_001003154.2">
    <property type="nucleotide sequence ID" value="NM_001003154.2"/>
</dbReference>
<dbReference type="CORUM" id="P82179"/>
<dbReference type="FunCoup" id="P82179">
    <property type="interactions" value="8"/>
</dbReference>
<dbReference type="STRING" id="9615.ENSCAFP00000001442"/>
<dbReference type="GlyCosmos" id="P82179">
    <property type="glycosylation" value="2 sites, No reported glycans"/>
</dbReference>
<dbReference type="iPTMnet" id="P82179"/>
<dbReference type="InParanoid" id="P82179"/>
<dbReference type="OrthoDB" id="9908116at2759"/>
<dbReference type="Proteomes" id="UP000002254">
    <property type="component" value="Unplaced"/>
</dbReference>
<dbReference type="Proteomes" id="UP000694429">
    <property type="component" value="Unplaced"/>
</dbReference>
<dbReference type="Proteomes" id="UP000694542">
    <property type="component" value="Unplaced"/>
</dbReference>
<dbReference type="Proteomes" id="UP000805418">
    <property type="component" value="Unplaced"/>
</dbReference>
<dbReference type="GO" id="GO:0014701">
    <property type="term" value="C:junctional sarcoplasmic reticulum membrane"/>
    <property type="evidence" value="ECO:0000318"/>
    <property type="project" value="GO_Central"/>
</dbReference>
<dbReference type="GO" id="GO:0005886">
    <property type="term" value="C:plasma membrane"/>
    <property type="evidence" value="ECO:0000318"/>
    <property type="project" value="GO_Central"/>
</dbReference>
<dbReference type="GO" id="GO:0016529">
    <property type="term" value="C:sarcoplasmic reticulum"/>
    <property type="evidence" value="ECO:0000314"/>
    <property type="project" value="BHF-UCL"/>
</dbReference>
<dbReference type="GO" id="GO:0030674">
    <property type="term" value="F:protein-macromolecule adaptor activity"/>
    <property type="evidence" value="ECO:0000353"/>
    <property type="project" value="BHF-UCL"/>
</dbReference>
<dbReference type="GO" id="GO:0005102">
    <property type="term" value="F:signaling receptor binding"/>
    <property type="evidence" value="ECO:0007669"/>
    <property type="project" value="InterPro"/>
</dbReference>
<dbReference type="GO" id="GO:0044325">
    <property type="term" value="F:transmembrane transporter binding"/>
    <property type="evidence" value="ECO:0000353"/>
    <property type="project" value="BHF-UCL"/>
</dbReference>
<dbReference type="GO" id="GO:0060047">
    <property type="term" value="P:heart contraction"/>
    <property type="evidence" value="ECO:0000318"/>
    <property type="project" value="GO_Central"/>
</dbReference>
<dbReference type="GO" id="GO:1901846">
    <property type="term" value="P:positive regulation of cell communication by electrical coupling involved in cardiac conduction"/>
    <property type="evidence" value="ECO:0000314"/>
    <property type="project" value="BHF-UCL"/>
</dbReference>
<dbReference type="GO" id="GO:0086036">
    <property type="term" value="P:regulation of cardiac muscle cell membrane potential"/>
    <property type="evidence" value="ECO:0000314"/>
    <property type="project" value="BHF-UCL"/>
</dbReference>
<dbReference type="GO" id="GO:0010881">
    <property type="term" value="P:regulation of cardiac muscle contraction by regulation of the release of sequestered calcium ion"/>
    <property type="evidence" value="ECO:0000314"/>
    <property type="project" value="BHF-UCL"/>
</dbReference>
<dbReference type="GO" id="GO:0010880">
    <property type="term" value="P:regulation of release of sequestered calcium ion into cytosol by sarcoplasmic reticulum"/>
    <property type="evidence" value="ECO:0000314"/>
    <property type="project" value="BHF-UCL"/>
</dbReference>
<dbReference type="GO" id="GO:0014808">
    <property type="term" value="P:release of sequestered calcium ion into cytosol by sarcoplasmic reticulum"/>
    <property type="evidence" value="ECO:0000318"/>
    <property type="project" value="GO_Central"/>
</dbReference>
<dbReference type="InterPro" id="IPR007943">
    <property type="entry name" value="Asp-B-hydro/Triadin_dom"/>
</dbReference>
<dbReference type="InterPro" id="IPR010798">
    <property type="entry name" value="Triadin"/>
</dbReference>
<dbReference type="PANTHER" id="PTHR14106">
    <property type="entry name" value="TRIADIN"/>
    <property type="match status" value="1"/>
</dbReference>
<dbReference type="PANTHER" id="PTHR14106:SF0">
    <property type="entry name" value="TRIADIN"/>
    <property type="match status" value="1"/>
</dbReference>
<dbReference type="Pfam" id="PF05279">
    <property type="entry name" value="Asp-B-Hydro_N"/>
    <property type="match status" value="1"/>
</dbReference>
<gene>
    <name type="primary">TRDN</name>
</gene>
<evidence type="ECO:0000250" key="1">
    <source>
        <dbReference type="UniProtKB" id="E9Q9K5"/>
    </source>
</evidence>
<evidence type="ECO:0000250" key="2">
    <source>
        <dbReference type="UniProtKB" id="Q28820"/>
    </source>
</evidence>
<evidence type="ECO:0000255" key="3"/>
<evidence type="ECO:0000256" key="4">
    <source>
        <dbReference type="SAM" id="MobiDB-lite"/>
    </source>
</evidence>
<evidence type="ECO:0000269" key="5">
    <source>
    </source>
</evidence>
<evidence type="ECO:0000269" key="6">
    <source>
    </source>
</evidence>
<evidence type="ECO:0000305" key="7"/>
<reference key="1">
    <citation type="journal article" date="1999" name="J. Biol. Chem.">
        <title>Identification of triadin 1 as the predominant triadin isoform expressed in mammalian myocardium.</title>
        <authorList>
            <person name="Kobayashi Y.M."/>
            <person name="Jones L.R."/>
        </authorList>
    </citation>
    <scope>NUCLEOTIDE SEQUENCE [MRNA] (ISOFORMS SKELETAL; CARDIAC 1 AND CARDIAC 3)</scope>
    <scope>ALTERNATIVE SPLICING</scope>
    <scope>TISSUE SPECIFICITY</scope>
    <scope>SUBCELLULAR LOCATION</scope>
    <scope>TOPOLOGY</scope>
    <scope>GLYCOSYLATION AT ASN-75</scope>
    <scope>MUTAGENESIS OF ASN-75</scope>
    <source>
        <tissue>Heart</tissue>
        <tissue>Skeletal muscle</tissue>
    </source>
</reference>
<reference key="2">
    <citation type="journal article" date="2010" name="J. Mol. Cell. Cardiol.">
        <title>The human CASQ2 mutation K206N is associated with hyperglycosylation and altered cellular calcium handling.</title>
        <authorList>
            <person name="Kirchhefer U."/>
            <person name="Wehrmeister D."/>
            <person name="Postma A.V."/>
            <person name="Pohlentz G."/>
            <person name="Mormann M."/>
            <person name="Kucerova D."/>
            <person name="Muller F.U."/>
            <person name="Schmitz W."/>
            <person name="Schulze-Bahr E."/>
            <person name="Wilde A.A."/>
            <person name="Neumann J."/>
        </authorList>
    </citation>
    <scope>INTERACTION WITH CASQ2</scope>
</reference>
<proteinExistence type="evidence at protein level"/>
<accession>P82179</accession>
<comment type="function">
    <text evidence="1">Contributes to the regulation of lumenal Ca2+ release via the sarcoplasmic reticulum calcium release channels RYR1 and RYR2, a key step in triggering skeletal and heart muscle contraction. Required for normal organization of the triad junction, where T-tubules and the sarcoplasmic reticulum terminal cisternae are in close contact. Required for normal skeletal muscle strength. Plays a role in excitation-contraction coupling in the heart and in regulating the rate of heart beats.</text>
</comment>
<comment type="subunit">
    <text evidence="2 6">Homooligomer of variable subunit number; disulfide-linked. Interacts with CASQ1 and RYR1 in skeletal muscle (By similarity). Interacts with CASQ2.</text>
</comment>
<comment type="subcellular location">
    <subcellularLocation>
        <location>Sarcoplasmic reticulum membrane</location>
        <topology evidence="5">Single-pass type II membrane protein</topology>
    </subcellularLocation>
</comment>
<comment type="alternative products">
    <event type="alternative splicing"/>
    <isoform>
        <id>P82179-1</id>
        <name>Skeletal</name>
        <sequence type="displayed"/>
    </isoform>
    <isoform>
        <id>P82179-2</id>
        <name>Cardiac 1</name>
        <sequence type="described" ref="VSP_004001 VSP_004002"/>
    </isoform>
    <isoform>
        <id>P82179-3</id>
        <name>Cardiac 3</name>
        <sequence type="described" ref="VSP_004003 VSP_004004"/>
    </isoform>
</comment>
<comment type="tissue specificity">
    <text evidence="5">Detected in heart (at protein level). Skeletal and cardiac muscle.</text>
</comment>
<comment type="PTM">
    <text evidence="2">Phosphorylated by CaMK2.</text>
</comment>
<comment type="PTM">
    <text evidence="5">N-glycosylated.</text>
</comment>
<sequence length="701" mass="78284">MTEITAEGNASTTTTVIDSKNGSVPKSPGKVLKRTVTEDIVTTFSSPAAWLLVIALIITWSAVAVVMFDLVDYKNFSASSLSKIGSDPLKLVHDAVEETTDWVYGFFSLLSDIISSDGDEDDDDGDEDTDKGEIEEPPLKQKEIHKEKAEKEEKPERKILAKVAHREKEKVKEKEKSEKKATHKEKIEKKEKPETKTMAKEERKAKTEEKIKKEVKGGKQEKVKPTAAKVKEVQKTPPKAKEKEGKETAAVAKHEQKDQYAFCRYMIDMFVHGDLRPGQSPALPPPLPTVQASRPTPASPTLEGKEEEEKKKAEKKVTSETKKKEKEDVKKKSDKDTAIDVEKKEPGKAPETKQGTIKVVAQAAAKKDEKKEDSKKTKTPVEEHPKGKKQEKKEKYVEPAKSSKKEHSAPSEKQVKAKTERAKEETSAASTKKAVPGKKEEKTTKTVEQEIRKEKSGKTSTASKDKEPEIKKDEKMPKADKEVKPKPPQSQVKKEEKSESQVKKEAKPEQDIAKPEKTVSHGKPEEKVVKQVKATEKAAIEKTVKPKPAKKAEHQEKESPTIKTDKPKPTSKETPEVTESGKKKIEKSEKESKEKAEMKHLKEEKVSTRKESLQSHNVTKAEKPARVSREDLEDVSASKKAKEEAEDVSSTKRQKSPISFFQCVYLDGYNGYGFQFPVTPAYRPGESSGQPSSPGQKQQGQ</sequence>
<feature type="chain" id="PRO_0000065625" description="Triadin">
    <location>
        <begin position="1"/>
        <end position="701"/>
    </location>
</feature>
<feature type="topological domain" description="Cytoplasmic" evidence="3">
    <location>
        <begin position="1"/>
        <end position="47"/>
    </location>
</feature>
<feature type="transmembrane region" description="Helical" evidence="3">
    <location>
        <begin position="48"/>
        <end position="68"/>
    </location>
</feature>
<feature type="topological domain" description="Lumenal" evidence="3">
    <location>
        <begin position="69"/>
        <end position="701"/>
    </location>
</feature>
<feature type="region of interest" description="Disordered" evidence="4">
    <location>
        <begin position="1"/>
        <end position="28"/>
    </location>
</feature>
<feature type="region of interest" description="Disordered" evidence="4">
    <location>
        <begin position="117"/>
        <end position="256"/>
    </location>
</feature>
<feature type="region of interest" description="Disordered" evidence="4">
    <location>
        <begin position="273"/>
        <end position="654"/>
    </location>
</feature>
<feature type="region of interest" description="Disordered" evidence="4">
    <location>
        <begin position="676"/>
        <end position="701"/>
    </location>
</feature>
<feature type="compositionally biased region" description="Polar residues" evidence="4">
    <location>
        <begin position="8"/>
        <end position="24"/>
    </location>
</feature>
<feature type="compositionally biased region" description="Acidic residues" evidence="4">
    <location>
        <begin position="117"/>
        <end position="130"/>
    </location>
</feature>
<feature type="compositionally biased region" description="Basic and acidic residues" evidence="4">
    <location>
        <begin position="131"/>
        <end position="256"/>
    </location>
</feature>
<feature type="compositionally biased region" description="Basic and acidic residues" evidence="4">
    <location>
        <begin position="303"/>
        <end position="351"/>
    </location>
</feature>
<feature type="compositionally biased region" description="Basic and acidic residues" evidence="4">
    <location>
        <begin position="365"/>
        <end position="385"/>
    </location>
</feature>
<feature type="compositionally biased region" description="Basic and acidic residues" evidence="4">
    <location>
        <begin position="391"/>
        <end position="426"/>
    </location>
</feature>
<feature type="compositionally biased region" description="Basic and acidic residues" evidence="4">
    <location>
        <begin position="437"/>
        <end position="485"/>
    </location>
</feature>
<feature type="compositionally biased region" description="Basic and acidic residues" evidence="4">
    <location>
        <begin position="492"/>
        <end position="643"/>
    </location>
</feature>
<feature type="compositionally biased region" description="Low complexity" evidence="4">
    <location>
        <begin position="684"/>
        <end position="701"/>
    </location>
</feature>
<feature type="glycosylation site" description="N-linked (GlcNAc...) asparagine" evidence="5">
    <location>
        <position position="75"/>
    </location>
</feature>
<feature type="glycosylation site" description="N-linked (GlcNAc...) asparagine" evidence="3">
    <location>
        <position position="617"/>
    </location>
</feature>
<feature type="disulfide bond" description="Interchain" evidence="2">
    <location>
        <position position="263"/>
    </location>
</feature>
<feature type="disulfide bond" description="Interchain" evidence="2">
    <location>
        <position position="663"/>
    </location>
</feature>
<feature type="splice variant" id="VSP_004001" description="In isoform Cardiac 1." evidence="7">
    <original>DQYAFCRYMIDMFVHGDLRPG</original>
    <variation>GKHSEEVAGGSKRTLGKKQIQ</variation>
    <location>
        <begin position="258"/>
        <end position="278"/>
    </location>
</feature>
<feature type="splice variant" id="VSP_004002" description="In isoform Cardiac 1." evidence="7">
    <location>
        <begin position="279"/>
        <end position="701"/>
    </location>
</feature>
<feature type="splice variant" id="VSP_004003" description="In isoform Cardiac 3." evidence="7">
    <original>E</original>
    <variation>EPIKGKEVKVPGSLKEKE</variation>
    <location>
        <position position="467"/>
    </location>
</feature>
<feature type="splice variant" id="VSP_004004" description="In isoform Cardiac 3." evidence="7">
    <original>EEKVVKQVKATEKAAIEKTVKPKPAKKAEHQEKESPTIKTDKPKPTSKETPEVTES</original>
    <variation>GILQVVPVVLNCLFLVQFQQDEELNVESKVFRMIHVLSHPTSRTSPILVISTTCRT</variation>
    <location>
        <begin position="525"/>
        <end position="580"/>
    </location>
</feature>
<feature type="mutagenesis site" description="Loss of glycosylation site." evidence="5">
    <original>N</original>
    <variation>A</variation>
    <location>
        <position position="75"/>
    </location>
</feature>
<organism>
    <name type="scientific">Canis lupus familiaris</name>
    <name type="common">Dog</name>
    <name type="synonym">Canis familiaris</name>
    <dbReference type="NCBI Taxonomy" id="9615"/>
    <lineage>
        <taxon>Eukaryota</taxon>
        <taxon>Metazoa</taxon>
        <taxon>Chordata</taxon>
        <taxon>Craniata</taxon>
        <taxon>Vertebrata</taxon>
        <taxon>Euteleostomi</taxon>
        <taxon>Mammalia</taxon>
        <taxon>Eutheria</taxon>
        <taxon>Laurasiatheria</taxon>
        <taxon>Carnivora</taxon>
        <taxon>Caniformia</taxon>
        <taxon>Canidae</taxon>
        <taxon>Canis</taxon>
    </lineage>
</organism>
<name>TRDN_CANLF</name>
<protein>
    <recommendedName>
        <fullName>Triadin</fullName>
    </recommendedName>
</protein>
<keyword id="KW-0025">Alternative splicing</keyword>
<keyword id="KW-1015">Disulfide bond</keyword>
<keyword id="KW-0325">Glycoprotein</keyword>
<keyword id="KW-0472">Membrane</keyword>
<keyword id="KW-0597">Phosphoprotein</keyword>
<keyword id="KW-1185">Reference proteome</keyword>
<keyword id="KW-0703">Sarcoplasmic reticulum</keyword>
<keyword id="KW-0812">Transmembrane</keyword>
<keyword id="KW-1133">Transmembrane helix</keyword>